<comment type="function">
    <text evidence="1">Produces ATP from ADP in the presence of a proton gradient across the membrane. The catalytic sites are hosted primarily by the beta subunits.</text>
</comment>
<comment type="catalytic activity">
    <reaction evidence="1">
        <text>ATP + H2O + 4 H(+)(in) = ADP + phosphate + 5 H(+)(out)</text>
        <dbReference type="Rhea" id="RHEA:57720"/>
        <dbReference type="ChEBI" id="CHEBI:15377"/>
        <dbReference type="ChEBI" id="CHEBI:15378"/>
        <dbReference type="ChEBI" id="CHEBI:30616"/>
        <dbReference type="ChEBI" id="CHEBI:43474"/>
        <dbReference type="ChEBI" id="CHEBI:456216"/>
        <dbReference type="EC" id="7.1.2.2"/>
    </reaction>
</comment>
<comment type="subunit">
    <text evidence="1">F-type ATPases have 2 components, CF(1) - the catalytic core - and CF(0) - the membrane proton channel. CF(1) has five subunits: alpha(3), beta(3), gamma(1), delta(1), epsilon(1). CF(0) has four main subunits: a(1), b(1), b'(1) and c(9-12).</text>
</comment>
<comment type="subcellular location">
    <subcellularLocation>
        <location evidence="1">Plastid</location>
        <location evidence="1">Chloroplast thylakoid membrane</location>
        <topology evidence="1">Peripheral membrane protein</topology>
    </subcellularLocation>
</comment>
<comment type="similarity">
    <text evidence="1">Belongs to the ATPase alpha/beta chains family.</text>
</comment>
<keyword id="KW-0066">ATP synthesis</keyword>
<keyword id="KW-0067">ATP-binding</keyword>
<keyword id="KW-0139">CF(1)</keyword>
<keyword id="KW-0150">Chloroplast</keyword>
<keyword id="KW-0375">Hydrogen ion transport</keyword>
<keyword id="KW-0406">Ion transport</keyword>
<keyword id="KW-0472">Membrane</keyword>
<keyword id="KW-0547">Nucleotide-binding</keyword>
<keyword id="KW-0934">Plastid</keyword>
<keyword id="KW-0793">Thylakoid</keyword>
<keyword id="KW-1278">Translocase</keyword>
<keyword id="KW-0813">Transport</keyword>
<proteinExistence type="inferred from homology"/>
<protein>
    <recommendedName>
        <fullName evidence="1">ATP synthase subunit beta, chloroplastic</fullName>
        <ecNumber evidence="1">7.1.2.2</ecNumber>
    </recommendedName>
    <alternativeName>
        <fullName evidence="1">ATP synthase F1 sector subunit beta</fullName>
    </alternativeName>
    <alternativeName>
        <fullName evidence="1">F-ATPase subunit beta</fullName>
    </alternativeName>
</protein>
<reference key="1">
    <citation type="journal article" date="2007" name="BMC Genomics">
        <title>Rapid evolutionary change of common bean (Phaseolus vulgaris L) plastome, and the genomic diversification of legume chloroplasts.</title>
        <authorList>
            <person name="Guo X."/>
            <person name="Castillo-Ramirez S."/>
            <person name="Gonzalez V."/>
            <person name="Bustos P."/>
            <person name="Fernandez-Vazquez J.L."/>
            <person name="Santamaria R.I."/>
            <person name="Arellano J."/>
            <person name="Cevallos M.A."/>
            <person name="Davila G."/>
        </authorList>
    </citation>
    <scope>NUCLEOTIDE SEQUENCE [LARGE SCALE GENOMIC DNA]</scope>
    <source>
        <strain>cv. Negro Jamapa</strain>
    </source>
</reference>
<reference key="2">
    <citation type="submission" date="2007-10" db="EMBL/GenBank/DDBJ databases">
        <title>Complete nucleotide sequence of the plastid genome of the common bean, Phaseolus vulgaris.</title>
        <authorList>
            <person name="Moore M.J."/>
            <person name="Triplett E.W."/>
            <person name="Broughton W.J."/>
            <person name="Soltis P.S."/>
            <person name="Soltis D.E."/>
        </authorList>
    </citation>
    <scope>NUCLEOTIDE SEQUENCE [LARGE SCALE GENOMIC DNA]</scope>
</reference>
<feature type="chain" id="PRO_0000339636" description="ATP synthase subunit beta, chloroplastic">
    <location>
        <begin position="1"/>
        <end position="498"/>
    </location>
</feature>
<feature type="binding site" evidence="1">
    <location>
        <begin position="172"/>
        <end position="179"/>
    </location>
    <ligand>
        <name>ATP</name>
        <dbReference type="ChEBI" id="CHEBI:30616"/>
    </ligand>
</feature>
<accession>A4GG90</accession>
<evidence type="ECO:0000255" key="1">
    <source>
        <dbReference type="HAMAP-Rule" id="MF_01347"/>
    </source>
</evidence>
<name>ATPB_PHAVU</name>
<geneLocation type="chloroplast"/>
<sequence length="498" mass="53772">MGINPTTSGPEVSSREKKNLGHIVQIIGPVLDVAFPPGKMPNIYNALVVKGRDTVGQQINVTCEVQQLLGNNRVRAVAMSATDGLMRGMEVIDTGTPLSVPVGGATLGRIFNVLGEPIDNLGPVDTRTTSPIHRSAPTFIQLDTKLSIFETGIKVVDLLAPYRRGGKIGLFGGAGVGKTVLIMELINNIAKAHGGVSVFGGVGERTREGNDLYMEMKESGVINEQNIAESKVALVYGQMNEPPGARMRVGLTALTMAEYFRDVNEQDVLLFIDNIFRFVQAGSEVSALLGRMPSAVGYQPTLSTEMGSLQERITSTKEGSITSIQAVYVPADDLTDPAPATTFAHLDATTVLSRGLAAKGIYPAVDPLDSTSTMLQPRIVGEEHYETAQRVKQTLQRYKELQDIIAILGLDELSEEDRLTVARARKIERFLSQPFFVAEVFTGSAGKYVGLVETIRGFNLILSGELDSLPEQAFYLVGNIDEATAKATNLEMESNLKK</sequence>
<dbReference type="EC" id="7.1.2.2" evidence="1"/>
<dbReference type="EMBL" id="DQ886273">
    <property type="protein sequence ID" value="ABH88071.1"/>
    <property type="molecule type" value="Genomic_DNA"/>
</dbReference>
<dbReference type="EMBL" id="EU196765">
    <property type="protein sequence ID" value="ABW22797.1"/>
    <property type="molecule type" value="Genomic_DNA"/>
</dbReference>
<dbReference type="RefSeq" id="YP_001122791.1">
    <property type="nucleotide sequence ID" value="NC_009259.1"/>
</dbReference>
<dbReference type="SMR" id="A4GG90"/>
<dbReference type="GeneID" id="4961749"/>
<dbReference type="KEGG" id="pvu:4961749"/>
<dbReference type="GO" id="GO:0009535">
    <property type="term" value="C:chloroplast thylakoid membrane"/>
    <property type="evidence" value="ECO:0007669"/>
    <property type="project" value="UniProtKB-SubCell"/>
</dbReference>
<dbReference type="GO" id="GO:0005739">
    <property type="term" value="C:mitochondrion"/>
    <property type="evidence" value="ECO:0007669"/>
    <property type="project" value="GOC"/>
</dbReference>
<dbReference type="GO" id="GO:0045259">
    <property type="term" value="C:proton-transporting ATP synthase complex"/>
    <property type="evidence" value="ECO:0007669"/>
    <property type="project" value="UniProtKB-KW"/>
</dbReference>
<dbReference type="GO" id="GO:0005524">
    <property type="term" value="F:ATP binding"/>
    <property type="evidence" value="ECO:0007669"/>
    <property type="project" value="UniProtKB-UniRule"/>
</dbReference>
<dbReference type="GO" id="GO:0016887">
    <property type="term" value="F:ATP hydrolysis activity"/>
    <property type="evidence" value="ECO:0007669"/>
    <property type="project" value="InterPro"/>
</dbReference>
<dbReference type="GO" id="GO:0046933">
    <property type="term" value="F:proton-transporting ATP synthase activity, rotational mechanism"/>
    <property type="evidence" value="ECO:0007669"/>
    <property type="project" value="UniProtKB-UniRule"/>
</dbReference>
<dbReference type="GO" id="GO:0042776">
    <property type="term" value="P:proton motive force-driven mitochondrial ATP synthesis"/>
    <property type="evidence" value="ECO:0007669"/>
    <property type="project" value="TreeGrafter"/>
</dbReference>
<dbReference type="CDD" id="cd18110">
    <property type="entry name" value="ATP-synt_F1_beta_C"/>
    <property type="match status" value="1"/>
</dbReference>
<dbReference type="CDD" id="cd18115">
    <property type="entry name" value="ATP-synt_F1_beta_N"/>
    <property type="match status" value="1"/>
</dbReference>
<dbReference type="CDD" id="cd01133">
    <property type="entry name" value="F1-ATPase_beta_CD"/>
    <property type="match status" value="1"/>
</dbReference>
<dbReference type="FunFam" id="1.10.1140.10:FF:000001">
    <property type="entry name" value="ATP synthase subunit beta"/>
    <property type="match status" value="1"/>
</dbReference>
<dbReference type="FunFam" id="3.40.50.12240:FF:000006">
    <property type="entry name" value="ATP synthase subunit beta"/>
    <property type="match status" value="1"/>
</dbReference>
<dbReference type="FunFam" id="3.40.50.300:FF:000004">
    <property type="entry name" value="ATP synthase subunit beta"/>
    <property type="match status" value="1"/>
</dbReference>
<dbReference type="FunFam" id="2.40.10.170:FF:000002">
    <property type="entry name" value="ATP synthase subunit beta, chloroplastic"/>
    <property type="match status" value="1"/>
</dbReference>
<dbReference type="Gene3D" id="2.40.10.170">
    <property type="match status" value="1"/>
</dbReference>
<dbReference type="Gene3D" id="1.10.1140.10">
    <property type="entry name" value="Bovine Mitochondrial F1-atpase, Atp Synthase Beta Chain, Chain D, domain 3"/>
    <property type="match status" value="1"/>
</dbReference>
<dbReference type="Gene3D" id="3.40.50.300">
    <property type="entry name" value="P-loop containing nucleotide triphosphate hydrolases"/>
    <property type="match status" value="1"/>
</dbReference>
<dbReference type="HAMAP" id="MF_01347">
    <property type="entry name" value="ATP_synth_beta_bact"/>
    <property type="match status" value="1"/>
</dbReference>
<dbReference type="InterPro" id="IPR003593">
    <property type="entry name" value="AAA+_ATPase"/>
</dbReference>
<dbReference type="InterPro" id="IPR055190">
    <property type="entry name" value="ATP-synt_VA_C"/>
</dbReference>
<dbReference type="InterPro" id="IPR005722">
    <property type="entry name" value="ATP_synth_F1_bsu"/>
</dbReference>
<dbReference type="InterPro" id="IPR020003">
    <property type="entry name" value="ATPase_a/bsu_AS"/>
</dbReference>
<dbReference type="InterPro" id="IPR050053">
    <property type="entry name" value="ATPase_alpha/beta_chains"/>
</dbReference>
<dbReference type="InterPro" id="IPR004100">
    <property type="entry name" value="ATPase_F1/V1/A1_a/bsu_N"/>
</dbReference>
<dbReference type="InterPro" id="IPR036121">
    <property type="entry name" value="ATPase_F1/V1/A1_a/bsu_N_sf"/>
</dbReference>
<dbReference type="InterPro" id="IPR000194">
    <property type="entry name" value="ATPase_F1/V1/A1_a/bsu_nucl-bd"/>
</dbReference>
<dbReference type="InterPro" id="IPR024034">
    <property type="entry name" value="ATPase_F1/V1_b/a_C"/>
</dbReference>
<dbReference type="InterPro" id="IPR027417">
    <property type="entry name" value="P-loop_NTPase"/>
</dbReference>
<dbReference type="NCBIfam" id="TIGR01039">
    <property type="entry name" value="atpD"/>
    <property type="match status" value="1"/>
</dbReference>
<dbReference type="PANTHER" id="PTHR15184">
    <property type="entry name" value="ATP SYNTHASE"/>
    <property type="match status" value="1"/>
</dbReference>
<dbReference type="PANTHER" id="PTHR15184:SF71">
    <property type="entry name" value="ATP SYNTHASE SUBUNIT BETA, MITOCHONDRIAL"/>
    <property type="match status" value="1"/>
</dbReference>
<dbReference type="Pfam" id="PF00006">
    <property type="entry name" value="ATP-synt_ab"/>
    <property type="match status" value="1"/>
</dbReference>
<dbReference type="Pfam" id="PF02874">
    <property type="entry name" value="ATP-synt_ab_N"/>
    <property type="match status" value="1"/>
</dbReference>
<dbReference type="Pfam" id="PF22919">
    <property type="entry name" value="ATP-synt_VA_C"/>
    <property type="match status" value="1"/>
</dbReference>
<dbReference type="SMART" id="SM00382">
    <property type="entry name" value="AAA"/>
    <property type="match status" value="1"/>
</dbReference>
<dbReference type="SUPFAM" id="SSF47917">
    <property type="entry name" value="C-terminal domain of alpha and beta subunits of F1 ATP synthase"/>
    <property type="match status" value="1"/>
</dbReference>
<dbReference type="SUPFAM" id="SSF50615">
    <property type="entry name" value="N-terminal domain of alpha and beta subunits of F1 ATP synthase"/>
    <property type="match status" value="1"/>
</dbReference>
<dbReference type="SUPFAM" id="SSF52540">
    <property type="entry name" value="P-loop containing nucleoside triphosphate hydrolases"/>
    <property type="match status" value="1"/>
</dbReference>
<dbReference type="PROSITE" id="PS00152">
    <property type="entry name" value="ATPASE_ALPHA_BETA"/>
    <property type="match status" value="1"/>
</dbReference>
<gene>
    <name evidence="1" type="primary">atpB</name>
</gene>
<organism>
    <name type="scientific">Phaseolus vulgaris</name>
    <name type="common">Kidney bean</name>
    <name type="synonym">French bean</name>
    <dbReference type="NCBI Taxonomy" id="3885"/>
    <lineage>
        <taxon>Eukaryota</taxon>
        <taxon>Viridiplantae</taxon>
        <taxon>Streptophyta</taxon>
        <taxon>Embryophyta</taxon>
        <taxon>Tracheophyta</taxon>
        <taxon>Spermatophyta</taxon>
        <taxon>Magnoliopsida</taxon>
        <taxon>eudicotyledons</taxon>
        <taxon>Gunneridae</taxon>
        <taxon>Pentapetalae</taxon>
        <taxon>rosids</taxon>
        <taxon>fabids</taxon>
        <taxon>Fabales</taxon>
        <taxon>Fabaceae</taxon>
        <taxon>Papilionoideae</taxon>
        <taxon>50 kb inversion clade</taxon>
        <taxon>NPAAA clade</taxon>
        <taxon>indigoferoid/millettioid clade</taxon>
        <taxon>Phaseoleae</taxon>
        <taxon>Phaseolus</taxon>
    </lineage>
</organism>